<name>PON1G_ANOEM</name>
<reference key="1">
    <citation type="journal article" date="2016" name="Biochim. Biophys. Acta">
        <title>Isolation and characterization of a structurally unique beta-hairpin venom peptide from the predatory ant Anochetus emarginatus.</title>
        <authorList>
            <person name="Touchard A."/>
            <person name="Brust A."/>
            <person name="Cardoso F."/>
            <person name="Chin Y.-K."/>
            <person name="Herzig V."/>
            <person name="Jin A.-H."/>
            <person name="Dejean A."/>
            <person name="Alewood P."/>
            <person name="King G."/>
            <person name="Orivel J."/>
            <person name="Escoubas P."/>
        </authorList>
    </citation>
    <scope>PROTEIN SEQUENCE</scope>
    <scope>SUBCELLULAR LOCATION</scope>
    <scope>MASS SPECTROMETRY</scope>
    <scope>AMIDATION AT GLY-18</scope>
    <scope>IDENTIFICATION BY MASS SPECTROMETRY</scope>
    <source>
        <tissue>Venom</tissue>
    </source>
</reference>
<keyword id="KW-0027">Amidation</keyword>
<keyword id="KW-0903">Direct protein sequencing</keyword>
<keyword id="KW-1015">Disulfide bond</keyword>
<keyword id="KW-0964">Secreted</keyword>
<keyword id="KW-0800">Toxin</keyword>
<evidence type="ECO:0000250" key="1">
    <source>
        <dbReference type="UniProtKB" id="C0HJY4"/>
    </source>
</evidence>
<evidence type="ECO:0000269" key="2">
    <source>
    </source>
</evidence>
<evidence type="ECO:0000303" key="3">
    <source>
    </source>
</evidence>
<evidence type="ECO:0000305" key="4"/>
<evidence type="ECO:0000305" key="5">
    <source>
    </source>
</evidence>
<comment type="subcellular location">
    <subcellularLocation>
        <location evidence="2">Secreted</location>
    </subcellularLocation>
</comment>
<comment type="tissue specificity">
    <text evidence="5">Expressed by the venom gland.</text>
</comment>
<comment type="mass spectrometry"/>
<comment type="similarity">
    <text evidence="4">Belongs to the poneritoxin-Ae1 family.</text>
</comment>
<sequence>GTGCSSGCHRVGQQCRCG</sequence>
<protein>
    <recommendedName>
        <fullName evidence="3">U1-poneritoxin-Ae1g</fullName>
        <shortName evidence="3">U1-PONTX-Ae1g</shortName>
    </recommendedName>
    <alternativeName>
        <fullName evidence="4">Poneratoxin</fullName>
    </alternativeName>
</protein>
<organism>
    <name type="scientific">Anochetus emarginatus</name>
    <name type="common">Ant</name>
    <name type="synonym">Stenomyrmex emarginatus</name>
    <dbReference type="NCBI Taxonomy" id="486636"/>
    <lineage>
        <taxon>Eukaryota</taxon>
        <taxon>Metazoa</taxon>
        <taxon>Ecdysozoa</taxon>
        <taxon>Arthropoda</taxon>
        <taxon>Hexapoda</taxon>
        <taxon>Insecta</taxon>
        <taxon>Pterygota</taxon>
        <taxon>Neoptera</taxon>
        <taxon>Endopterygota</taxon>
        <taxon>Hymenoptera</taxon>
        <taxon>Apocrita</taxon>
        <taxon>Aculeata</taxon>
        <taxon>Formicoidea</taxon>
        <taxon>Formicidae</taxon>
        <taxon>Ponerinae</taxon>
        <taxon>Ponerini</taxon>
        <taxon>Anochetus</taxon>
    </lineage>
</organism>
<dbReference type="GO" id="GO:0005576">
    <property type="term" value="C:extracellular region"/>
    <property type="evidence" value="ECO:0007669"/>
    <property type="project" value="UniProtKB-SubCell"/>
</dbReference>
<dbReference type="GO" id="GO:0090729">
    <property type="term" value="F:toxin activity"/>
    <property type="evidence" value="ECO:0007669"/>
    <property type="project" value="UniProtKB-KW"/>
</dbReference>
<feature type="peptide" id="PRO_0000437879" description="U1-poneritoxin-Ae1g" evidence="2">
    <location>
        <begin position="1"/>
        <end position="18"/>
    </location>
</feature>
<feature type="modified residue" description="Glycine amide" evidence="2">
    <location>
        <position position="18"/>
    </location>
</feature>
<feature type="disulfide bond" evidence="1">
    <location>
        <begin position="4"/>
        <end position="15"/>
    </location>
</feature>
<feature type="disulfide bond" evidence="1">
    <location>
        <begin position="8"/>
        <end position="17"/>
    </location>
</feature>
<proteinExistence type="evidence at protein level"/>
<accession>C0HJZ0</accession>